<name>CP3A9_RAT</name>
<comment type="function">
    <text>This isozyme seems to be implicated in olfaction. Active in the demethylation of erythromycin as well as benzphetamine.</text>
</comment>
<comment type="catalytic activity">
    <reaction>
        <text>an organic molecule + reduced [NADPH--hemoprotein reductase] + O2 = an alcohol + oxidized [NADPH--hemoprotein reductase] + H2O + H(+)</text>
        <dbReference type="Rhea" id="RHEA:17149"/>
        <dbReference type="Rhea" id="RHEA-COMP:11964"/>
        <dbReference type="Rhea" id="RHEA-COMP:11965"/>
        <dbReference type="ChEBI" id="CHEBI:15377"/>
        <dbReference type="ChEBI" id="CHEBI:15378"/>
        <dbReference type="ChEBI" id="CHEBI:15379"/>
        <dbReference type="ChEBI" id="CHEBI:30879"/>
        <dbReference type="ChEBI" id="CHEBI:57618"/>
        <dbReference type="ChEBI" id="CHEBI:58210"/>
        <dbReference type="ChEBI" id="CHEBI:142491"/>
        <dbReference type="EC" id="1.14.14.1"/>
    </reaction>
</comment>
<comment type="cofactor">
    <cofactor evidence="1">
        <name>heme</name>
        <dbReference type="ChEBI" id="CHEBI:30413"/>
    </cofactor>
</comment>
<comment type="subcellular location">
    <subcellularLocation>
        <location>Endoplasmic reticulum membrane</location>
        <topology>Peripheral membrane protein</topology>
    </subcellularLocation>
    <subcellularLocation>
        <location>Microsome membrane</location>
        <topology>Peripheral membrane protein</topology>
    </subcellularLocation>
</comment>
<comment type="tissue specificity">
    <text>Mainly expressed in olfactory epithelium.</text>
</comment>
<comment type="similarity">
    <text evidence="2">Belongs to the cytochrome P450 family.</text>
</comment>
<sequence length="503" mass="57812">MDLIPNFSMETWLLLVISLVLLYLYGTHSHGIFKKLGIPGPKPLPFLGTILAYRKGFWEFDKYCHKKYGKLWGLYDGRQPVLAITDPDIIKTVLVKECYSTFTNRRNFGPVGILKKAISISEDEEWKRIRALLSPTFTSGKLKEMFPIINQYTDMLVRNMRQGSEEGKPTSMKDIFGAYSMDVITATSFGVNVDSLNNPQDPFVEKVKKLLKFDIFDPLFLSVTLFPFLTPLFEALNVSMFPRDVIDFFKTSVERMKENRMKEKEKQRMDFLQLMINSQNSKVKDSHKALSDVEIVAQSVIFIFAGYETTSSALSFVLYLLAIHPDIQKKLQDEIDAALPNKAHATYDTLLQMEYLDMVVNETLRLYPIAGRLERVCKTDVEINGVFIPKGTVVMIPTFALHKDPHYWPEPEEFRPERFSKKNQDNINPYMYLPFGNGPRNCIGMRFALMNMKVALFRVLQNFSFQPCKETQIPLKLSKQGLLQPEKPLLLKVVSRDETVNGA</sequence>
<gene>
    <name type="primary">Cyp3a9</name>
    <name type="synonym">Cyp3a13</name>
</gene>
<reference key="1">
    <citation type="journal article" date="1997" name="Arch. Biochem. Biophys.">
        <title>Expression and inducibility of cytochrome P450 3A9 (CYP3A9) and other members of the CYP3A subfamily in rat liver.</title>
        <authorList>
            <person name="Mahnke A."/>
            <person name="Strotkamp D."/>
            <person name="Roos P.H."/>
            <person name="Hanstein W.G."/>
            <person name="Chabot G.G."/>
            <person name="Nef P."/>
        </authorList>
    </citation>
    <scope>NUCLEOTIDE SEQUENCE [MRNA]</scope>
    <source>
        <strain>Sprague-Dawley</strain>
    </source>
</reference>
<reference key="2">
    <citation type="journal article" date="1996" name="Biochem. Biophys. Res. Commun.">
        <title>cDNA cloning of a novel CYP3A from rat brain.</title>
        <authorList>
            <person name="Wang H."/>
            <person name="Kawashima H."/>
            <person name="Strobel H.W."/>
        </authorList>
    </citation>
    <scope>NUCLEOTIDE SEQUENCE [MRNA]</scope>
    <source>
        <tissue>Brain</tissue>
    </source>
</reference>
<dbReference type="EC" id="1.14.14.1"/>
<dbReference type="EMBL" id="U60085">
    <property type="protein sequence ID" value="AAB03662.1"/>
    <property type="molecule type" value="mRNA"/>
</dbReference>
<dbReference type="EMBL" id="U46118">
    <property type="protein sequence ID" value="AAC52582.1"/>
    <property type="molecule type" value="mRNA"/>
</dbReference>
<dbReference type="PIR" id="JC4702">
    <property type="entry name" value="JC4702"/>
</dbReference>
<dbReference type="SMR" id="P51538"/>
<dbReference type="FunCoup" id="P51538">
    <property type="interactions" value="53"/>
</dbReference>
<dbReference type="STRING" id="10116.ENSRNOP00000067681"/>
<dbReference type="ChEMBL" id="CHEMBL3430866"/>
<dbReference type="PhosphoSitePlus" id="P51538"/>
<dbReference type="UCSC" id="RGD:708392">
    <property type="organism name" value="rat"/>
</dbReference>
<dbReference type="AGR" id="RGD:708392"/>
<dbReference type="RGD" id="708392">
    <property type="gene designation" value="Cyp3a9"/>
</dbReference>
<dbReference type="InParanoid" id="P51538"/>
<dbReference type="PhylomeDB" id="P51538"/>
<dbReference type="Reactome" id="R-RNO-211945">
    <property type="pathway name" value="Phase I - Functionalization of compounds"/>
</dbReference>
<dbReference type="Reactome" id="R-RNO-211958">
    <property type="pathway name" value="Miscellaneous substrates"/>
</dbReference>
<dbReference type="Reactome" id="R-RNO-211981">
    <property type="pathway name" value="Xenobiotics"/>
</dbReference>
<dbReference type="Reactome" id="R-RNO-5423646">
    <property type="pathway name" value="Aflatoxin activation and detoxification"/>
</dbReference>
<dbReference type="Reactome" id="R-RNO-9027307">
    <property type="pathway name" value="Biosynthesis of maresin-like SPMs"/>
</dbReference>
<dbReference type="Reactome" id="R-RNO-9749641">
    <property type="pathway name" value="Aspirin ADME"/>
</dbReference>
<dbReference type="Reactome" id="R-RNO-9754706">
    <property type="pathway name" value="Atorvastatin ADME"/>
</dbReference>
<dbReference type="Reactome" id="R-RNO-9757110">
    <property type="pathway name" value="Prednisone ADME"/>
</dbReference>
<dbReference type="PRO" id="PR:P51538"/>
<dbReference type="Proteomes" id="UP000002494">
    <property type="component" value="Unplaced"/>
</dbReference>
<dbReference type="GO" id="GO:0005789">
    <property type="term" value="C:endoplasmic reticulum membrane"/>
    <property type="evidence" value="ECO:0007669"/>
    <property type="project" value="UniProtKB-SubCell"/>
</dbReference>
<dbReference type="GO" id="GO:0101020">
    <property type="term" value="F:estrogen 16-alpha-hydroxylase activity"/>
    <property type="evidence" value="ECO:0000266"/>
    <property type="project" value="RGD"/>
</dbReference>
<dbReference type="GO" id="GO:0020037">
    <property type="term" value="F:heme binding"/>
    <property type="evidence" value="ECO:0007669"/>
    <property type="project" value="InterPro"/>
</dbReference>
<dbReference type="GO" id="GO:0005506">
    <property type="term" value="F:iron ion binding"/>
    <property type="evidence" value="ECO:0007669"/>
    <property type="project" value="InterPro"/>
</dbReference>
<dbReference type="GO" id="GO:0004497">
    <property type="term" value="F:monooxygenase activity"/>
    <property type="evidence" value="ECO:0000250"/>
    <property type="project" value="UniProtKB"/>
</dbReference>
<dbReference type="GO" id="GO:0016491">
    <property type="term" value="F:oxidoreductase activity"/>
    <property type="evidence" value="ECO:0000266"/>
    <property type="project" value="RGD"/>
</dbReference>
<dbReference type="GO" id="GO:0008401">
    <property type="term" value="F:retinoic acid 4-hydroxylase activity"/>
    <property type="evidence" value="ECO:0000266"/>
    <property type="project" value="RGD"/>
</dbReference>
<dbReference type="GO" id="GO:0008395">
    <property type="term" value="F:steroid hydroxylase activity"/>
    <property type="evidence" value="ECO:0000304"/>
    <property type="project" value="RGD"/>
</dbReference>
<dbReference type="GO" id="GO:0050649">
    <property type="term" value="F:testosterone 6-beta-hydroxylase activity"/>
    <property type="evidence" value="ECO:0000318"/>
    <property type="project" value="GO_Central"/>
</dbReference>
<dbReference type="GO" id="GO:0009822">
    <property type="term" value="P:alkaloid catabolic process"/>
    <property type="evidence" value="ECO:0000266"/>
    <property type="project" value="RGD"/>
</dbReference>
<dbReference type="GO" id="GO:0008210">
    <property type="term" value="P:estrogen metabolic process"/>
    <property type="evidence" value="ECO:0000266"/>
    <property type="project" value="RGD"/>
</dbReference>
<dbReference type="GO" id="GO:0007565">
    <property type="term" value="P:female pregnancy"/>
    <property type="evidence" value="ECO:0000270"/>
    <property type="project" value="RGD"/>
</dbReference>
<dbReference type="GO" id="GO:0002933">
    <property type="term" value="P:lipid hydroxylation"/>
    <property type="evidence" value="ECO:0000266"/>
    <property type="project" value="RGD"/>
</dbReference>
<dbReference type="GO" id="GO:0070989">
    <property type="term" value="P:oxidative demethylation"/>
    <property type="evidence" value="ECO:0000266"/>
    <property type="project" value="RGD"/>
</dbReference>
<dbReference type="GO" id="GO:0010628">
    <property type="term" value="P:positive regulation of gene expression"/>
    <property type="evidence" value="ECO:0000266"/>
    <property type="project" value="RGD"/>
</dbReference>
<dbReference type="GO" id="GO:0071548">
    <property type="term" value="P:response to dexamethasone"/>
    <property type="evidence" value="ECO:0000270"/>
    <property type="project" value="RGD"/>
</dbReference>
<dbReference type="GO" id="GO:0032355">
    <property type="term" value="P:response to estradiol"/>
    <property type="evidence" value="ECO:0000270"/>
    <property type="project" value="RGD"/>
</dbReference>
<dbReference type="GO" id="GO:0043627">
    <property type="term" value="P:response to estrogen"/>
    <property type="evidence" value="ECO:0000270"/>
    <property type="project" value="RGD"/>
</dbReference>
<dbReference type="GO" id="GO:0045471">
    <property type="term" value="P:response to ethanol"/>
    <property type="evidence" value="ECO:0000270"/>
    <property type="project" value="RGD"/>
</dbReference>
<dbReference type="GO" id="GO:0010043">
    <property type="term" value="P:response to zinc ion"/>
    <property type="evidence" value="ECO:0000270"/>
    <property type="project" value="RGD"/>
</dbReference>
<dbReference type="GO" id="GO:0042573">
    <property type="term" value="P:retinoic acid metabolic process"/>
    <property type="evidence" value="ECO:0000266"/>
    <property type="project" value="RGD"/>
</dbReference>
<dbReference type="GO" id="GO:0007608">
    <property type="term" value="P:sensory perception of smell"/>
    <property type="evidence" value="ECO:0007669"/>
    <property type="project" value="UniProtKB-KW"/>
</dbReference>
<dbReference type="GO" id="GO:0008202">
    <property type="term" value="P:steroid metabolic process"/>
    <property type="evidence" value="ECO:0000266"/>
    <property type="project" value="RGD"/>
</dbReference>
<dbReference type="GO" id="GO:0042178">
    <property type="term" value="P:xenobiotic catabolic process"/>
    <property type="evidence" value="ECO:0000266"/>
    <property type="project" value="RGD"/>
</dbReference>
<dbReference type="CDD" id="cd20650">
    <property type="entry name" value="CYP3A"/>
    <property type="match status" value="1"/>
</dbReference>
<dbReference type="FunFam" id="1.10.630.10:FF:000096">
    <property type="entry name" value="Cytochrome P450 3A4"/>
    <property type="match status" value="1"/>
</dbReference>
<dbReference type="Gene3D" id="1.10.630.10">
    <property type="entry name" value="Cytochrome P450"/>
    <property type="match status" value="1"/>
</dbReference>
<dbReference type="InterPro" id="IPR001128">
    <property type="entry name" value="Cyt_P450"/>
</dbReference>
<dbReference type="InterPro" id="IPR017972">
    <property type="entry name" value="Cyt_P450_CS"/>
</dbReference>
<dbReference type="InterPro" id="IPR008072">
    <property type="entry name" value="Cyt_P450_E_CYP3A"/>
</dbReference>
<dbReference type="InterPro" id="IPR002402">
    <property type="entry name" value="Cyt_P450_E_grp-II"/>
</dbReference>
<dbReference type="InterPro" id="IPR036396">
    <property type="entry name" value="Cyt_P450_sf"/>
</dbReference>
<dbReference type="InterPro" id="IPR050705">
    <property type="entry name" value="Cytochrome_P450_3A"/>
</dbReference>
<dbReference type="PANTHER" id="PTHR24302:SF38">
    <property type="entry name" value="CYTOCHROME P450 3A5"/>
    <property type="match status" value="1"/>
</dbReference>
<dbReference type="PANTHER" id="PTHR24302">
    <property type="entry name" value="CYTOCHROME P450 FAMILY 3"/>
    <property type="match status" value="1"/>
</dbReference>
<dbReference type="Pfam" id="PF00067">
    <property type="entry name" value="p450"/>
    <property type="match status" value="1"/>
</dbReference>
<dbReference type="PRINTS" id="PR00464">
    <property type="entry name" value="EP450II"/>
</dbReference>
<dbReference type="PRINTS" id="PR01689">
    <property type="entry name" value="EP450IICYP3A"/>
</dbReference>
<dbReference type="PRINTS" id="PR00385">
    <property type="entry name" value="P450"/>
</dbReference>
<dbReference type="SUPFAM" id="SSF48264">
    <property type="entry name" value="Cytochrome P450"/>
    <property type="match status" value="1"/>
</dbReference>
<dbReference type="PROSITE" id="PS00086">
    <property type="entry name" value="CYTOCHROME_P450"/>
    <property type="match status" value="1"/>
</dbReference>
<accession>P51538</accession>
<accession>Q64557</accession>
<accession>Q64631</accession>
<protein>
    <recommendedName>
        <fullName>Cytochrome P450 3A9</fullName>
        <ecNumber>1.14.14.1</ecNumber>
    </recommendedName>
    <alternativeName>
        <fullName>3AH15</fullName>
    </alternativeName>
    <alternativeName>
        <fullName>CYPIIIA9</fullName>
    </alternativeName>
    <alternativeName>
        <fullName>Cytochrome P450 olfactive 3</fullName>
    </alternativeName>
    <alternativeName>
        <fullName>Cytochrome P450-OLF3</fullName>
    </alternativeName>
</protein>
<organism>
    <name type="scientific">Rattus norvegicus</name>
    <name type="common">Rat</name>
    <dbReference type="NCBI Taxonomy" id="10116"/>
    <lineage>
        <taxon>Eukaryota</taxon>
        <taxon>Metazoa</taxon>
        <taxon>Chordata</taxon>
        <taxon>Craniata</taxon>
        <taxon>Vertebrata</taxon>
        <taxon>Euteleostomi</taxon>
        <taxon>Mammalia</taxon>
        <taxon>Eutheria</taxon>
        <taxon>Euarchontoglires</taxon>
        <taxon>Glires</taxon>
        <taxon>Rodentia</taxon>
        <taxon>Myomorpha</taxon>
        <taxon>Muroidea</taxon>
        <taxon>Muridae</taxon>
        <taxon>Murinae</taxon>
        <taxon>Rattus</taxon>
    </lineage>
</organism>
<evidence type="ECO:0000250" key="1"/>
<evidence type="ECO:0000305" key="2"/>
<proteinExistence type="evidence at transcript level"/>
<feature type="chain" id="PRO_0000051792" description="Cytochrome P450 3A9">
    <location>
        <begin position="1"/>
        <end position="503"/>
    </location>
</feature>
<feature type="binding site" description="axial binding residue" evidence="1">
    <location>
        <position position="442"/>
    </location>
    <ligand>
        <name>heme</name>
        <dbReference type="ChEBI" id="CHEBI:30413"/>
    </ligand>
    <ligandPart>
        <name>Fe</name>
        <dbReference type="ChEBI" id="CHEBI:18248"/>
    </ligandPart>
</feature>
<feature type="sequence conflict" description="In Ref. 2; AAC52582." evidence="2" ref="2">
    <original>F</original>
    <variation>V</variation>
    <location>
        <position position="457"/>
    </location>
</feature>
<keyword id="KW-0256">Endoplasmic reticulum</keyword>
<keyword id="KW-0349">Heme</keyword>
<keyword id="KW-0408">Iron</keyword>
<keyword id="KW-0472">Membrane</keyword>
<keyword id="KW-0479">Metal-binding</keyword>
<keyword id="KW-0492">Microsome</keyword>
<keyword id="KW-0503">Monooxygenase</keyword>
<keyword id="KW-0552">Olfaction</keyword>
<keyword id="KW-0560">Oxidoreductase</keyword>
<keyword id="KW-1185">Reference proteome</keyword>
<keyword id="KW-0716">Sensory transduction</keyword>